<sequence length="328" mass="36522">MMQDLRLILIIVGAIAIIALLVHGFWTSRKERSSMFRDRPLKRMKSKRDDDSYDEDVEDDEGVGEVRVHRVNHAPANAQEHEAARPSPQHQYQPPYASAQPRQPVQQPPEAQVPPQHAPRPAQPVQQPVYQPQPEQPLQQPVSPQVAPAPQPVHSAPQPAQQAFQPAEPVAAPQPEPVAEPAPVMDKPKRKEAVIIMNVAAHHGSELNGELLLNSIQQAGFIFGDMNIYHRHLSPDGSGPALFSLANMVKPGTFDPEMKDFTTPGVTIFMQVPSYGDELQNFKLMLQSAQHIADEVGGVVLDDQRRMMTPQKLREYQDIIREVKDANA</sequence>
<protein>
    <recommendedName>
        <fullName evidence="1">Cell division protein ZipA</fullName>
    </recommendedName>
</protein>
<organism>
    <name type="scientific">Shigella boydii serotype 4 (strain Sb227)</name>
    <dbReference type="NCBI Taxonomy" id="300268"/>
    <lineage>
        <taxon>Bacteria</taxon>
        <taxon>Pseudomonadati</taxon>
        <taxon>Pseudomonadota</taxon>
        <taxon>Gammaproteobacteria</taxon>
        <taxon>Enterobacterales</taxon>
        <taxon>Enterobacteriaceae</taxon>
        <taxon>Shigella</taxon>
    </lineage>
</organism>
<evidence type="ECO:0000255" key="1">
    <source>
        <dbReference type="HAMAP-Rule" id="MF_00509"/>
    </source>
</evidence>
<evidence type="ECO:0000256" key="2">
    <source>
        <dbReference type="SAM" id="MobiDB-lite"/>
    </source>
</evidence>
<dbReference type="EMBL" id="CP000036">
    <property type="protein sequence ID" value="ABB66991.1"/>
    <property type="molecule type" value="Genomic_DNA"/>
</dbReference>
<dbReference type="RefSeq" id="WP_004985469.1">
    <property type="nucleotide sequence ID" value="NC_007613.1"/>
</dbReference>
<dbReference type="SMR" id="Q31Y67"/>
<dbReference type="KEGG" id="sbo:SBO_2436"/>
<dbReference type="HOGENOM" id="CLU_030174_1_0_6"/>
<dbReference type="Proteomes" id="UP000007067">
    <property type="component" value="Chromosome"/>
</dbReference>
<dbReference type="GO" id="GO:0032153">
    <property type="term" value="C:cell division site"/>
    <property type="evidence" value="ECO:0007669"/>
    <property type="project" value="UniProtKB-UniRule"/>
</dbReference>
<dbReference type="GO" id="GO:0005886">
    <property type="term" value="C:plasma membrane"/>
    <property type="evidence" value="ECO:0007669"/>
    <property type="project" value="UniProtKB-SubCell"/>
</dbReference>
<dbReference type="GO" id="GO:0000917">
    <property type="term" value="P:division septum assembly"/>
    <property type="evidence" value="ECO:0007669"/>
    <property type="project" value="TreeGrafter"/>
</dbReference>
<dbReference type="GO" id="GO:0043093">
    <property type="term" value="P:FtsZ-dependent cytokinesis"/>
    <property type="evidence" value="ECO:0007669"/>
    <property type="project" value="UniProtKB-UniRule"/>
</dbReference>
<dbReference type="CDD" id="cd00231">
    <property type="entry name" value="ZipA"/>
    <property type="match status" value="1"/>
</dbReference>
<dbReference type="FunFam" id="3.30.1400.10:FF:000001">
    <property type="entry name" value="Cell division protein ZipA"/>
    <property type="match status" value="1"/>
</dbReference>
<dbReference type="Gene3D" id="3.30.1400.10">
    <property type="entry name" value="ZipA, C-terminal FtsZ-binding domain"/>
    <property type="match status" value="1"/>
</dbReference>
<dbReference type="HAMAP" id="MF_00509">
    <property type="entry name" value="ZipA"/>
    <property type="match status" value="1"/>
</dbReference>
<dbReference type="InterPro" id="IPR011919">
    <property type="entry name" value="Cell_div_ZipA"/>
</dbReference>
<dbReference type="InterPro" id="IPR007449">
    <property type="entry name" value="ZipA_FtsZ-bd_C"/>
</dbReference>
<dbReference type="InterPro" id="IPR036765">
    <property type="entry name" value="ZipA_FtsZ-bd_C_sf"/>
</dbReference>
<dbReference type="NCBIfam" id="TIGR02205">
    <property type="entry name" value="septum_zipA"/>
    <property type="match status" value="1"/>
</dbReference>
<dbReference type="PANTHER" id="PTHR38685">
    <property type="entry name" value="CELL DIVISION PROTEIN ZIPA"/>
    <property type="match status" value="1"/>
</dbReference>
<dbReference type="PANTHER" id="PTHR38685:SF1">
    <property type="entry name" value="CELL DIVISION PROTEIN ZIPA"/>
    <property type="match status" value="1"/>
</dbReference>
<dbReference type="Pfam" id="PF04354">
    <property type="entry name" value="ZipA_C"/>
    <property type="match status" value="1"/>
</dbReference>
<dbReference type="SMART" id="SM00771">
    <property type="entry name" value="ZipA_C"/>
    <property type="match status" value="1"/>
</dbReference>
<dbReference type="SUPFAM" id="SSF64383">
    <property type="entry name" value="Cell-division protein ZipA, C-terminal domain"/>
    <property type="match status" value="1"/>
</dbReference>
<accession>Q31Y67</accession>
<proteinExistence type="inferred from homology"/>
<gene>
    <name evidence="1" type="primary">zipA</name>
    <name type="ordered locus">SBO_2436</name>
</gene>
<name>ZIPA_SHIBS</name>
<feature type="chain" id="PRO_0000237135" description="Cell division protein ZipA">
    <location>
        <begin position="1"/>
        <end position="328"/>
    </location>
</feature>
<feature type="topological domain" description="Periplasmic" evidence="1">
    <location>
        <begin position="1"/>
        <end position="6"/>
    </location>
</feature>
<feature type="transmembrane region" description="Helical" evidence="1">
    <location>
        <begin position="7"/>
        <end position="27"/>
    </location>
</feature>
<feature type="topological domain" description="Cytoplasmic" evidence="1">
    <location>
        <begin position="28"/>
        <end position="328"/>
    </location>
</feature>
<feature type="region of interest" description="Disordered" evidence="2">
    <location>
        <begin position="42"/>
        <end position="186"/>
    </location>
</feature>
<feature type="compositionally biased region" description="Acidic residues" evidence="2">
    <location>
        <begin position="51"/>
        <end position="63"/>
    </location>
</feature>
<feature type="compositionally biased region" description="Low complexity" evidence="2">
    <location>
        <begin position="99"/>
        <end position="115"/>
    </location>
</feature>
<feature type="compositionally biased region" description="Low complexity" evidence="2">
    <location>
        <begin position="123"/>
        <end position="171"/>
    </location>
</feature>
<comment type="function">
    <text evidence="1">Essential cell division protein that stabilizes the FtsZ protofilaments by cross-linking them and that serves as a cytoplasmic membrane anchor for the Z ring. Also required for the recruitment to the septal ring of downstream cell division proteins.</text>
</comment>
<comment type="subunit">
    <text evidence="1">Interacts with FtsZ via their C-terminal domains.</text>
</comment>
<comment type="subcellular location">
    <subcellularLocation>
        <location evidence="1">Cell inner membrane</location>
        <topology evidence="1">Single-pass type I membrane protein</topology>
    </subcellularLocation>
    <text evidence="1">Localizes to the Z ring in an FtsZ-dependent manner.</text>
</comment>
<comment type="similarity">
    <text evidence="1">Belongs to the ZipA family.</text>
</comment>
<reference key="1">
    <citation type="journal article" date="2005" name="Nucleic Acids Res.">
        <title>Genome dynamics and diversity of Shigella species, the etiologic agents of bacillary dysentery.</title>
        <authorList>
            <person name="Yang F."/>
            <person name="Yang J."/>
            <person name="Zhang X."/>
            <person name="Chen L."/>
            <person name="Jiang Y."/>
            <person name="Yan Y."/>
            <person name="Tang X."/>
            <person name="Wang J."/>
            <person name="Xiong Z."/>
            <person name="Dong J."/>
            <person name="Xue Y."/>
            <person name="Zhu Y."/>
            <person name="Xu X."/>
            <person name="Sun L."/>
            <person name="Chen S."/>
            <person name="Nie H."/>
            <person name="Peng J."/>
            <person name="Xu J."/>
            <person name="Wang Y."/>
            <person name="Yuan Z."/>
            <person name="Wen Y."/>
            <person name="Yao Z."/>
            <person name="Shen Y."/>
            <person name="Qiang B."/>
            <person name="Hou Y."/>
            <person name="Yu J."/>
            <person name="Jin Q."/>
        </authorList>
    </citation>
    <scope>NUCLEOTIDE SEQUENCE [LARGE SCALE GENOMIC DNA]</scope>
    <source>
        <strain>Sb227</strain>
    </source>
</reference>
<keyword id="KW-0131">Cell cycle</keyword>
<keyword id="KW-0132">Cell division</keyword>
<keyword id="KW-0997">Cell inner membrane</keyword>
<keyword id="KW-1003">Cell membrane</keyword>
<keyword id="KW-0472">Membrane</keyword>
<keyword id="KW-0812">Transmembrane</keyword>
<keyword id="KW-1133">Transmembrane helix</keyword>